<name>GPMI_CLOK5</name>
<gene>
    <name evidence="1" type="primary">gpmI</name>
    <name type="ordered locus">CKL_3379</name>
</gene>
<comment type="function">
    <text evidence="1">Catalyzes the interconversion of 2-phosphoglycerate and 3-phosphoglycerate.</text>
</comment>
<comment type="catalytic activity">
    <reaction evidence="1">
        <text>(2R)-2-phosphoglycerate = (2R)-3-phosphoglycerate</text>
        <dbReference type="Rhea" id="RHEA:15901"/>
        <dbReference type="ChEBI" id="CHEBI:58272"/>
        <dbReference type="ChEBI" id="CHEBI:58289"/>
        <dbReference type="EC" id="5.4.2.12"/>
    </reaction>
</comment>
<comment type="cofactor">
    <cofactor evidence="1">
        <name>Mn(2+)</name>
        <dbReference type="ChEBI" id="CHEBI:29035"/>
    </cofactor>
    <text evidence="1">Binds 2 manganese ions per subunit.</text>
</comment>
<comment type="pathway">
    <text evidence="1">Carbohydrate degradation; glycolysis; pyruvate from D-glyceraldehyde 3-phosphate: step 3/5.</text>
</comment>
<comment type="subunit">
    <text evidence="1">Monomer.</text>
</comment>
<comment type="similarity">
    <text evidence="1">Belongs to the BPG-independent phosphoglycerate mutase family.</text>
</comment>
<proteinExistence type="inferred from homology"/>
<dbReference type="EC" id="5.4.2.12" evidence="1"/>
<dbReference type="EMBL" id="CP000673">
    <property type="protein sequence ID" value="EDK35382.1"/>
    <property type="molecule type" value="Genomic_DNA"/>
</dbReference>
<dbReference type="RefSeq" id="WP_012103712.1">
    <property type="nucleotide sequence ID" value="NC_009706.1"/>
</dbReference>
<dbReference type="SMR" id="A5N2N6"/>
<dbReference type="STRING" id="431943.CKL_3379"/>
<dbReference type="KEGG" id="ckl:CKL_3379"/>
<dbReference type="eggNOG" id="COG0696">
    <property type="taxonomic scope" value="Bacteria"/>
</dbReference>
<dbReference type="HOGENOM" id="CLU_026099_2_0_9"/>
<dbReference type="UniPathway" id="UPA00109">
    <property type="reaction ID" value="UER00186"/>
</dbReference>
<dbReference type="Proteomes" id="UP000002411">
    <property type="component" value="Chromosome"/>
</dbReference>
<dbReference type="GO" id="GO:0005829">
    <property type="term" value="C:cytosol"/>
    <property type="evidence" value="ECO:0007669"/>
    <property type="project" value="TreeGrafter"/>
</dbReference>
<dbReference type="GO" id="GO:0030145">
    <property type="term" value="F:manganese ion binding"/>
    <property type="evidence" value="ECO:0007669"/>
    <property type="project" value="UniProtKB-UniRule"/>
</dbReference>
<dbReference type="GO" id="GO:0004619">
    <property type="term" value="F:phosphoglycerate mutase activity"/>
    <property type="evidence" value="ECO:0007669"/>
    <property type="project" value="UniProtKB-EC"/>
</dbReference>
<dbReference type="GO" id="GO:0006007">
    <property type="term" value="P:glucose catabolic process"/>
    <property type="evidence" value="ECO:0007669"/>
    <property type="project" value="InterPro"/>
</dbReference>
<dbReference type="GO" id="GO:0006096">
    <property type="term" value="P:glycolytic process"/>
    <property type="evidence" value="ECO:0007669"/>
    <property type="project" value="UniProtKB-UniRule"/>
</dbReference>
<dbReference type="CDD" id="cd16010">
    <property type="entry name" value="iPGM"/>
    <property type="match status" value="1"/>
</dbReference>
<dbReference type="FunFam" id="3.40.1450.10:FF:000001">
    <property type="entry name" value="2,3-bisphosphoglycerate-independent phosphoglycerate mutase"/>
    <property type="match status" value="1"/>
</dbReference>
<dbReference type="FunFam" id="3.40.720.10:FF:000001">
    <property type="entry name" value="2,3-bisphosphoglycerate-independent phosphoglycerate mutase"/>
    <property type="match status" value="1"/>
</dbReference>
<dbReference type="Gene3D" id="3.40.720.10">
    <property type="entry name" value="Alkaline Phosphatase, subunit A"/>
    <property type="match status" value="1"/>
</dbReference>
<dbReference type="Gene3D" id="3.40.1450.10">
    <property type="entry name" value="BPG-independent phosphoglycerate mutase, domain B"/>
    <property type="match status" value="1"/>
</dbReference>
<dbReference type="HAMAP" id="MF_01038">
    <property type="entry name" value="GpmI"/>
    <property type="match status" value="1"/>
</dbReference>
<dbReference type="InterPro" id="IPR017850">
    <property type="entry name" value="Alkaline_phosphatase_core_sf"/>
</dbReference>
<dbReference type="InterPro" id="IPR011258">
    <property type="entry name" value="BPG-indep_PGM_N"/>
</dbReference>
<dbReference type="InterPro" id="IPR006124">
    <property type="entry name" value="Metalloenzyme"/>
</dbReference>
<dbReference type="InterPro" id="IPR036646">
    <property type="entry name" value="PGAM_B_sf"/>
</dbReference>
<dbReference type="InterPro" id="IPR005995">
    <property type="entry name" value="Pgm_bpd_ind"/>
</dbReference>
<dbReference type="NCBIfam" id="TIGR01307">
    <property type="entry name" value="pgm_bpd_ind"/>
    <property type="match status" value="1"/>
</dbReference>
<dbReference type="PANTHER" id="PTHR31637">
    <property type="entry name" value="2,3-BISPHOSPHOGLYCERATE-INDEPENDENT PHOSPHOGLYCERATE MUTASE"/>
    <property type="match status" value="1"/>
</dbReference>
<dbReference type="PANTHER" id="PTHR31637:SF0">
    <property type="entry name" value="2,3-BISPHOSPHOGLYCERATE-INDEPENDENT PHOSPHOGLYCERATE MUTASE"/>
    <property type="match status" value="1"/>
</dbReference>
<dbReference type="Pfam" id="PF06415">
    <property type="entry name" value="iPGM_N"/>
    <property type="match status" value="1"/>
</dbReference>
<dbReference type="Pfam" id="PF01676">
    <property type="entry name" value="Metalloenzyme"/>
    <property type="match status" value="1"/>
</dbReference>
<dbReference type="PIRSF" id="PIRSF001492">
    <property type="entry name" value="IPGAM"/>
    <property type="match status" value="1"/>
</dbReference>
<dbReference type="SUPFAM" id="SSF64158">
    <property type="entry name" value="2,3-Bisphosphoglycerate-independent phosphoglycerate mutase, substrate-binding domain"/>
    <property type="match status" value="1"/>
</dbReference>
<dbReference type="SUPFAM" id="SSF53649">
    <property type="entry name" value="Alkaline phosphatase-like"/>
    <property type="match status" value="1"/>
</dbReference>
<evidence type="ECO:0000255" key="1">
    <source>
        <dbReference type="HAMAP-Rule" id="MF_01038"/>
    </source>
</evidence>
<protein>
    <recommendedName>
        <fullName evidence="1">2,3-bisphosphoglycerate-independent phosphoglycerate mutase</fullName>
        <shortName evidence="1">BPG-independent PGAM</shortName>
        <shortName evidence="1">Phosphoglyceromutase</shortName>
        <shortName evidence="1">iPGM</shortName>
        <ecNumber evidence="1">5.4.2.12</ecNumber>
    </recommendedName>
</protein>
<reference key="1">
    <citation type="journal article" date="2008" name="Proc. Natl. Acad. Sci. U.S.A.">
        <title>The genome of Clostridium kluyveri, a strict anaerobe with unique metabolic features.</title>
        <authorList>
            <person name="Seedorf H."/>
            <person name="Fricke W.F."/>
            <person name="Veith B."/>
            <person name="Brueggemann H."/>
            <person name="Liesegang H."/>
            <person name="Strittmatter A."/>
            <person name="Miethke M."/>
            <person name="Buckel W."/>
            <person name="Hinderberger J."/>
            <person name="Li F."/>
            <person name="Hagemeier C."/>
            <person name="Thauer R.K."/>
            <person name="Gottschalk G."/>
        </authorList>
    </citation>
    <scope>NUCLEOTIDE SEQUENCE [LARGE SCALE GENOMIC DNA]</scope>
    <source>
        <strain>ATCC 8527 / DSM 555 / NBRC 12016 / NCIMB 10680 / K1</strain>
    </source>
</reference>
<accession>A5N2N6</accession>
<keyword id="KW-0324">Glycolysis</keyword>
<keyword id="KW-0413">Isomerase</keyword>
<keyword id="KW-0464">Manganese</keyword>
<keyword id="KW-0479">Metal-binding</keyword>
<keyword id="KW-1185">Reference proteome</keyword>
<feature type="chain" id="PRO_1000084299" description="2,3-bisphosphoglycerate-independent phosphoglycerate mutase">
    <location>
        <begin position="1"/>
        <end position="509"/>
    </location>
</feature>
<feature type="active site" description="Phosphoserine intermediate" evidence="1">
    <location>
        <position position="62"/>
    </location>
</feature>
<feature type="binding site" evidence="1">
    <location>
        <position position="12"/>
    </location>
    <ligand>
        <name>Mn(2+)</name>
        <dbReference type="ChEBI" id="CHEBI:29035"/>
        <label>2</label>
    </ligand>
</feature>
<feature type="binding site" evidence="1">
    <location>
        <position position="62"/>
    </location>
    <ligand>
        <name>Mn(2+)</name>
        <dbReference type="ChEBI" id="CHEBI:29035"/>
        <label>2</label>
    </ligand>
</feature>
<feature type="binding site" evidence="1">
    <location>
        <position position="123"/>
    </location>
    <ligand>
        <name>substrate</name>
    </ligand>
</feature>
<feature type="binding site" evidence="1">
    <location>
        <begin position="153"/>
        <end position="154"/>
    </location>
    <ligand>
        <name>substrate</name>
    </ligand>
</feature>
<feature type="binding site" evidence="1">
    <location>
        <position position="185"/>
    </location>
    <ligand>
        <name>substrate</name>
    </ligand>
</feature>
<feature type="binding site" evidence="1">
    <location>
        <position position="191"/>
    </location>
    <ligand>
        <name>substrate</name>
    </ligand>
</feature>
<feature type="binding site" evidence="1">
    <location>
        <begin position="260"/>
        <end position="263"/>
    </location>
    <ligand>
        <name>substrate</name>
    </ligand>
</feature>
<feature type="binding site" evidence="1">
    <location>
        <position position="333"/>
    </location>
    <ligand>
        <name>substrate</name>
    </ligand>
</feature>
<feature type="binding site" evidence="1">
    <location>
        <position position="400"/>
    </location>
    <ligand>
        <name>Mn(2+)</name>
        <dbReference type="ChEBI" id="CHEBI:29035"/>
        <label>1</label>
    </ligand>
</feature>
<feature type="binding site" evidence="1">
    <location>
        <position position="404"/>
    </location>
    <ligand>
        <name>Mn(2+)</name>
        <dbReference type="ChEBI" id="CHEBI:29035"/>
        <label>1</label>
    </ligand>
</feature>
<feature type="binding site" evidence="1">
    <location>
        <position position="441"/>
    </location>
    <ligand>
        <name>Mn(2+)</name>
        <dbReference type="ChEBI" id="CHEBI:29035"/>
        <label>2</label>
    </ligand>
</feature>
<feature type="binding site" evidence="1">
    <location>
        <position position="442"/>
    </location>
    <ligand>
        <name>Mn(2+)</name>
        <dbReference type="ChEBI" id="CHEBI:29035"/>
        <label>2</label>
    </ligand>
</feature>
<feature type="binding site" evidence="1">
    <location>
        <position position="460"/>
    </location>
    <ligand>
        <name>Mn(2+)</name>
        <dbReference type="ChEBI" id="CHEBI:29035"/>
        <label>1</label>
    </ligand>
</feature>
<organism>
    <name type="scientific">Clostridium kluyveri (strain ATCC 8527 / DSM 555 / NBRC 12016 / NCIMB 10680 / K1)</name>
    <dbReference type="NCBI Taxonomy" id="431943"/>
    <lineage>
        <taxon>Bacteria</taxon>
        <taxon>Bacillati</taxon>
        <taxon>Bacillota</taxon>
        <taxon>Clostridia</taxon>
        <taxon>Eubacteriales</taxon>
        <taxon>Clostridiaceae</taxon>
        <taxon>Clostridium</taxon>
    </lineage>
</organism>
<sequence>MGKKPVMLMILDGFGISKIDNGNAVKAAYKPNLDKYFKKYPHTELGASGLSVGLPEGQMGNSEVGHLNIGAGRIVYQALTRITKSINEGQFFKNEVLNSAVDNAVKNNSDLHLLGLVSPGGVHSHTNHLKGLLQLAKQKGASRVYIHAFTDGRDVPPSSAYMYIDDMEKYIQKIGIGKIATVSGRYYAMDRDKRWERVELAYNALVYGRGNKAASASEAVTNSYDNGKTDEFIVPTVIEEDNKPVTTIKNGDSVIFFNFRPDRARQLTRALNDNIFKGFKREKLDLKFVTMTEYDATLENVYVAFNNEVYKNTLGEYVSKMEKSQLRIAETEKYAHVTFFFNGGVEAPNRNEDRELIPSPKVATYDLKPEMSAREVTSTVLDRLDQDKYDMIILNFANPDMVGHTGIFQAAKKAIEVVDECLGRIVSKILEKNGTVFITADHGNSEQMVDYSTGNPMTAHTTNSVPFLYVSKNSTELRKDGILADISPTILQVMGLEKPKEMTGKSLIK</sequence>